<feature type="chain" id="PRO_0000271601" description="DNA protection during starvation protein">
    <location>
        <begin position="1"/>
        <end position="167"/>
    </location>
</feature>
<feature type="binding site" evidence="1">
    <location>
        <position position="51"/>
    </location>
    <ligand>
        <name>Fe cation</name>
        <dbReference type="ChEBI" id="CHEBI:24875"/>
    </ligand>
</feature>
<feature type="binding site" evidence="1">
    <location>
        <position position="78"/>
    </location>
    <ligand>
        <name>Fe cation</name>
        <dbReference type="ChEBI" id="CHEBI:24875"/>
    </ligand>
</feature>
<feature type="binding site" evidence="1">
    <location>
        <position position="82"/>
    </location>
    <ligand>
        <name>Fe cation</name>
        <dbReference type="ChEBI" id="CHEBI:24875"/>
    </ligand>
</feature>
<name>DPS_YERPS</name>
<accession>Q669E1</accession>
<comment type="function">
    <text evidence="1">During stationary phase, binds the chromosome non-specifically, forming a highly ordered and stable dps-DNA co-crystal within which chromosomal DNA is condensed and protected from diverse damages. It protects DNA from oxidative damage by sequestering intracellular Fe(2+) ion and storing it in the form of Fe(3+) oxyhydroxide mineral, which can be released after reduction. One hydrogen peroxide oxidizes two Fe(2+) ions, which prevents hydroxyl radical production by the Fenton reaction.</text>
</comment>
<comment type="catalytic activity">
    <reaction evidence="1">
        <text>2 Fe(2+) + H2O2 + 2 H(+) = 2 Fe(3+) + 2 H2O</text>
        <dbReference type="Rhea" id="RHEA:48712"/>
        <dbReference type="ChEBI" id="CHEBI:15377"/>
        <dbReference type="ChEBI" id="CHEBI:15378"/>
        <dbReference type="ChEBI" id="CHEBI:16240"/>
        <dbReference type="ChEBI" id="CHEBI:29033"/>
        <dbReference type="ChEBI" id="CHEBI:29034"/>
    </reaction>
</comment>
<comment type="subunit">
    <text evidence="1">Homododecamer. The 12 subunits form a hollow sphere into which the mineral iron core of up to 500 Fe(3+) can be deposited.</text>
</comment>
<comment type="subcellular location">
    <subcellularLocation>
        <location evidence="1">Cytoplasm</location>
    </subcellularLocation>
</comment>
<comment type="similarity">
    <text evidence="1">Belongs to the Dps family.</text>
</comment>
<sequence>MSTAKLVKTKPSELLYTRNDVEEHVKVATIKRLNQMVIQFIDLSLITKQAHWNMRGANFVAVHEMLDGFRTALTDHLDTFAERAVQLGGVALGTAQVINDKTPLKSYPTNIHSVQEHLKALAERYAIVANDIRKAITEVEDENSADMFTAASRDLDKFLWFIESNIE</sequence>
<gene>
    <name evidence="1" type="primary">dps</name>
    <name type="ordered locus">YPTB2546</name>
</gene>
<organism>
    <name type="scientific">Yersinia pseudotuberculosis serotype I (strain IP32953)</name>
    <dbReference type="NCBI Taxonomy" id="273123"/>
    <lineage>
        <taxon>Bacteria</taxon>
        <taxon>Pseudomonadati</taxon>
        <taxon>Pseudomonadota</taxon>
        <taxon>Gammaproteobacteria</taxon>
        <taxon>Enterobacterales</taxon>
        <taxon>Yersiniaceae</taxon>
        <taxon>Yersinia</taxon>
    </lineage>
</organism>
<proteinExistence type="inferred from homology"/>
<dbReference type="EC" id="1.16.-.-" evidence="1"/>
<dbReference type="EMBL" id="BX936398">
    <property type="protein sequence ID" value="CAH21784.1"/>
    <property type="molecule type" value="Genomic_DNA"/>
</dbReference>
<dbReference type="RefSeq" id="WP_002210233.1">
    <property type="nucleotide sequence ID" value="NZ_CP009712.1"/>
</dbReference>
<dbReference type="SMR" id="Q669E1"/>
<dbReference type="GeneID" id="57976175"/>
<dbReference type="KEGG" id="ypo:BZ17_4091"/>
<dbReference type="KEGG" id="yps:YPTB2546"/>
<dbReference type="PATRIC" id="fig|273123.14.peg.4304"/>
<dbReference type="Proteomes" id="UP000001011">
    <property type="component" value="Chromosome"/>
</dbReference>
<dbReference type="GO" id="GO:0005737">
    <property type="term" value="C:cytoplasm"/>
    <property type="evidence" value="ECO:0007669"/>
    <property type="project" value="UniProtKB-SubCell"/>
</dbReference>
<dbReference type="GO" id="GO:0003677">
    <property type="term" value="F:DNA binding"/>
    <property type="evidence" value="ECO:0007669"/>
    <property type="project" value="UniProtKB-UniRule"/>
</dbReference>
<dbReference type="GO" id="GO:0008199">
    <property type="term" value="F:ferric iron binding"/>
    <property type="evidence" value="ECO:0007669"/>
    <property type="project" value="UniProtKB-UniRule"/>
</dbReference>
<dbReference type="GO" id="GO:0016722">
    <property type="term" value="F:oxidoreductase activity, acting on metal ions"/>
    <property type="evidence" value="ECO:0007669"/>
    <property type="project" value="InterPro"/>
</dbReference>
<dbReference type="GO" id="GO:0030261">
    <property type="term" value="P:chromosome condensation"/>
    <property type="evidence" value="ECO:0007669"/>
    <property type="project" value="UniProtKB-KW"/>
</dbReference>
<dbReference type="GO" id="GO:0006879">
    <property type="term" value="P:intracellular iron ion homeostasis"/>
    <property type="evidence" value="ECO:0007669"/>
    <property type="project" value="UniProtKB-KW"/>
</dbReference>
<dbReference type="CDD" id="cd01043">
    <property type="entry name" value="DPS"/>
    <property type="match status" value="1"/>
</dbReference>
<dbReference type="Gene3D" id="1.20.1260.10">
    <property type="match status" value="1"/>
</dbReference>
<dbReference type="HAMAP" id="MF_01441">
    <property type="entry name" value="Dps"/>
    <property type="match status" value="1"/>
</dbReference>
<dbReference type="InterPro" id="IPR002177">
    <property type="entry name" value="DPS_DNA-bd"/>
</dbReference>
<dbReference type="InterPro" id="IPR023188">
    <property type="entry name" value="DPS_DNA-bd_CS"/>
</dbReference>
<dbReference type="InterPro" id="IPR023067">
    <property type="entry name" value="Dps_gammaproteobac"/>
</dbReference>
<dbReference type="InterPro" id="IPR012347">
    <property type="entry name" value="Ferritin-like"/>
</dbReference>
<dbReference type="InterPro" id="IPR009078">
    <property type="entry name" value="Ferritin-like_SF"/>
</dbReference>
<dbReference type="InterPro" id="IPR008331">
    <property type="entry name" value="Ferritin_DPS_dom"/>
</dbReference>
<dbReference type="NCBIfam" id="NF006975">
    <property type="entry name" value="PRK09448.1"/>
    <property type="match status" value="1"/>
</dbReference>
<dbReference type="PANTHER" id="PTHR42932:SF3">
    <property type="entry name" value="DNA PROTECTION DURING STARVATION PROTEIN"/>
    <property type="match status" value="1"/>
</dbReference>
<dbReference type="PANTHER" id="PTHR42932">
    <property type="entry name" value="GENERAL STRESS PROTEIN 20U"/>
    <property type="match status" value="1"/>
</dbReference>
<dbReference type="Pfam" id="PF00210">
    <property type="entry name" value="Ferritin"/>
    <property type="match status" value="1"/>
</dbReference>
<dbReference type="PIRSF" id="PIRSF005900">
    <property type="entry name" value="Dps"/>
    <property type="match status" value="1"/>
</dbReference>
<dbReference type="PRINTS" id="PR01346">
    <property type="entry name" value="HELNAPAPROT"/>
</dbReference>
<dbReference type="SUPFAM" id="SSF47240">
    <property type="entry name" value="Ferritin-like"/>
    <property type="match status" value="1"/>
</dbReference>
<dbReference type="PROSITE" id="PS00818">
    <property type="entry name" value="DPS_1"/>
    <property type="match status" value="1"/>
</dbReference>
<protein>
    <recommendedName>
        <fullName evidence="1">DNA protection during starvation protein</fullName>
        <ecNumber evidence="1">1.16.-.-</ecNumber>
    </recommendedName>
</protein>
<evidence type="ECO:0000255" key="1">
    <source>
        <dbReference type="HAMAP-Rule" id="MF_01441"/>
    </source>
</evidence>
<reference key="1">
    <citation type="journal article" date="2004" name="Proc. Natl. Acad. Sci. U.S.A.">
        <title>Insights into the evolution of Yersinia pestis through whole-genome comparison with Yersinia pseudotuberculosis.</title>
        <authorList>
            <person name="Chain P.S.G."/>
            <person name="Carniel E."/>
            <person name="Larimer F.W."/>
            <person name="Lamerdin J."/>
            <person name="Stoutland P.O."/>
            <person name="Regala W.M."/>
            <person name="Georgescu A.M."/>
            <person name="Vergez L.M."/>
            <person name="Land M.L."/>
            <person name="Motin V.L."/>
            <person name="Brubaker R.R."/>
            <person name="Fowler J."/>
            <person name="Hinnebusch J."/>
            <person name="Marceau M."/>
            <person name="Medigue C."/>
            <person name="Simonet M."/>
            <person name="Chenal-Francisque V."/>
            <person name="Souza B."/>
            <person name="Dacheux D."/>
            <person name="Elliott J.M."/>
            <person name="Derbise A."/>
            <person name="Hauser L.J."/>
            <person name="Garcia E."/>
        </authorList>
    </citation>
    <scope>NUCLEOTIDE SEQUENCE [LARGE SCALE GENOMIC DNA]</scope>
    <source>
        <strain>IP32953</strain>
    </source>
</reference>
<keyword id="KW-0963">Cytoplasm</keyword>
<keyword id="KW-0226">DNA condensation</keyword>
<keyword id="KW-0238">DNA-binding</keyword>
<keyword id="KW-0408">Iron</keyword>
<keyword id="KW-0409">Iron storage</keyword>
<keyword id="KW-0479">Metal-binding</keyword>
<keyword id="KW-0560">Oxidoreductase</keyword>